<proteinExistence type="inferred from homology"/>
<name>RLME_PSYCK</name>
<protein>
    <recommendedName>
        <fullName evidence="1">Ribosomal RNA large subunit methyltransferase E</fullName>
        <ecNumber evidence="1">2.1.1.166</ecNumber>
    </recommendedName>
    <alternativeName>
        <fullName evidence="1">23S rRNA Um2552 methyltransferase</fullName>
    </alternativeName>
    <alternativeName>
        <fullName evidence="1">rRNA (uridine-2'-O-)-methyltransferase</fullName>
    </alternativeName>
</protein>
<comment type="function">
    <text evidence="1">Specifically methylates the uridine in position 2552 of 23S rRNA at the 2'-O position of the ribose in the fully assembled 50S ribosomal subunit.</text>
</comment>
<comment type="catalytic activity">
    <reaction evidence="1">
        <text>uridine(2552) in 23S rRNA + S-adenosyl-L-methionine = 2'-O-methyluridine(2552) in 23S rRNA + S-adenosyl-L-homocysteine + H(+)</text>
        <dbReference type="Rhea" id="RHEA:42720"/>
        <dbReference type="Rhea" id="RHEA-COMP:10202"/>
        <dbReference type="Rhea" id="RHEA-COMP:10203"/>
        <dbReference type="ChEBI" id="CHEBI:15378"/>
        <dbReference type="ChEBI" id="CHEBI:57856"/>
        <dbReference type="ChEBI" id="CHEBI:59789"/>
        <dbReference type="ChEBI" id="CHEBI:65315"/>
        <dbReference type="ChEBI" id="CHEBI:74478"/>
        <dbReference type="EC" id="2.1.1.166"/>
    </reaction>
</comment>
<comment type="subcellular location">
    <subcellularLocation>
        <location evidence="1">Cytoplasm</location>
    </subcellularLocation>
</comment>
<comment type="similarity">
    <text evidence="1">Belongs to the class I-like SAM-binding methyltransferase superfamily. RNA methyltransferase RlmE family.</text>
</comment>
<accession>Q1Q955</accession>
<feature type="chain" id="PRO_0000282778" description="Ribosomal RNA large subunit methyltransferase E">
    <location>
        <begin position="1"/>
        <end position="210"/>
    </location>
</feature>
<feature type="active site" description="Proton acceptor" evidence="1">
    <location>
        <position position="168"/>
    </location>
</feature>
<feature type="binding site" evidence="1">
    <location>
        <position position="67"/>
    </location>
    <ligand>
        <name>S-adenosyl-L-methionine</name>
        <dbReference type="ChEBI" id="CHEBI:59789"/>
    </ligand>
</feature>
<feature type="binding site" evidence="1">
    <location>
        <position position="69"/>
    </location>
    <ligand>
        <name>S-adenosyl-L-methionine</name>
        <dbReference type="ChEBI" id="CHEBI:59789"/>
    </ligand>
</feature>
<feature type="binding site" evidence="1">
    <location>
        <position position="87"/>
    </location>
    <ligand>
        <name>S-adenosyl-L-methionine</name>
        <dbReference type="ChEBI" id="CHEBI:59789"/>
    </ligand>
</feature>
<feature type="binding site" evidence="1">
    <location>
        <position position="103"/>
    </location>
    <ligand>
        <name>S-adenosyl-L-methionine</name>
        <dbReference type="ChEBI" id="CHEBI:59789"/>
    </ligand>
</feature>
<feature type="binding site" evidence="1">
    <location>
        <position position="128"/>
    </location>
    <ligand>
        <name>S-adenosyl-L-methionine</name>
        <dbReference type="ChEBI" id="CHEBI:59789"/>
    </ligand>
</feature>
<keyword id="KW-0963">Cytoplasm</keyword>
<keyword id="KW-0489">Methyltransferase</keyword>
<keyword id="KW-0698">rRNA processing</keyword>
<keyword id="KW-0949">S-adenosyl-L-methionine</keyword>
<keyword id="KW-0808">Transferase</keyword>
<dbReference type="EC" id="2.1.1.166" evidence="1"/>
<dbReference type="EMBL" id="CP000323">
    <property type="protein sequence ID" value="ABE75798.1"/>
    <property type="molecule type" value="Genomic_DNA"/>
</dbReference>
<dbReference type="RefSeq" id="WP_011514338.1">
    <property type="nucleotide sequence ID" value="NC_007969.1"/>
</dbReference>
<dbReference type="SMR" id="Q1Q955"/>
<dbReference type="STRING" id="335284.Pcryo_2021"/>
<dbReference type="KEGG" id="pcr:Pcryo_2021"/>
<dbReference type="eggNOG" id="COG0293">
    <property type="taxonomic scope" value="Bacteria"/>
</dbReference>
<dbReference type="HOGENOM" id="CLU_009422_4_0_6"/>
<dbReference type="Proteomes" id="UP000002425">
    <property type="component" value="Chromosome"/>
</dbReference>
<dbReference type="GO" id="GO:0005737">
    <property type="term" value="C:cytoplasm"/>
    <property type="evidence" value="ECO:0007669"/>
    <property type="project" value="UniProtKB-SubCell"/>
</dbReference>
<dbReference type="GO" id="GO:0008650">
    <property type="term" value="F:rRNA (uridine-2'-O-)-methyltransferase activity"/>
    <property type="evidence" value="ECO:0007669"/>
    <property type="project" value="UniProtKB-UniRule"/>
</dbReference>
<dbReference type="FunFam" id="3.40.50.150:FF:000005">
    <property type="entry name" value="Ribosomal RNA large subunit methyltransferase E"/>
    <property type="match status" value="1"/>
</dbReference>
<dbReference type="Gene3D" id="3.40.50.150">
    <property type="entry name" value="Vaccinia Virus protein VP39"/>
    <property type="match status" value="1"/>
</dbReference>
<dbReference type="HAMAP" id="MF_01547">
    <property type="entry name" value="RNA_methyltr_E"/>
    <property type="match status" value="1"/>
</dbReference>
<dbReference type="InterPro" id="IPR050082">
    <property type="entry name" value="RNA_methyltr_RlmE"/>
</dbReference>
<dbReference type="InterPro" id="IPR002877">
    <property type="entry name" value="RNA_MeTrfase_FtsJ_dom"/>
</dbReference>
<dbReference type="InterPro" id="IPR015507">
    <property type="entry name" value="rRNA-MeTfrase_E"/>
</dbReference>
<dbReference type="InterPro" id="IPR029063">
    <property type="entry name" value="SAM-dependent_MTases_sf"/>
</dbReference>
<dbReference type="PANTHER" id="PTHR10920">
    <property type="entry name" value="RIBOSOMAL RNA METHYLTRANSFERASE"/>
    <property type="match status" value="1"/>
</dbReference>
<dbReference type="PANTHER" id="PTHR10920:SF18">
    <property type="entry name" value="RRNA METHYLTRANSFERASE 2, MITOCHONDRIAL"/>
    <property type="match status" value="1"/>
</dbReference>
<dbReference type="Pfam" id="PF01728">
    <property type="entry name" value="FtsJ"/>
    <property type="match status" value="1"/>
</dbReference>
<dbReference type="PIRSF" id="PIRSF005461">
    <property type="entry name" value="23S_rRNA_mtase"/>
    <property type="match status" value="1"/>
</dbReference>
<dbReference type="SUPFAM" id="SSF53335">
    <property type="entry name" value="S-adenosyl-L-methionine-dependent methyltransferases"/>
    <property type="match status" value="1"/>
</dbReference>
<reference key="1">
    <citation type="submission" date="2006-03" db="EMBL/GenBank/DDBJ databases">
        <title>Complete sequence of chromosome of Psychrobacter cryohalolentis K5.</title>
        <authorList>
            <consortium name="US DOE Joint Genome Institute"/>
            <person name="Copeland A."/>
            <person name="Lucas S."/>
            <person name="Lapidus A."/>
            <person name="Barry K."/>
            <person name="Detter J.C."/>
            <person name="Glavina T."/>
            <person name="Hammon N."/>
            <person name="Israni S."/>
            <person name="Dalin E."/>
            <person name="Tice H."/>
            <person name="Pitluck S."/>
            <person name="Brettin T."/>
            <person name="Bruce D."/>
            <person name="Han C."/>
            <person name="Tapia R."/>
            <person name="Sims D.R."/>
            <person name="Gilna P."/>
            <person name="Schmutz J."/>
            <person name="Larimer F."/>
            <person name="Land M."/>
            <person name="Hauser L."/>
            <person name="Kyrpides N."/>
            <person name="Kim E."/>
            <person name="Richardson P."/>
        </authorList>
    </citation>
    <scope>NUCLEOTIDE SEQUENCE [LARGE SCALE GENOMIC DNA]</scope>
    <source>
        <strain>ATCC BAA-1226 / DSM 17306 / VKM B-2378 / K5</strain>
    </source>
</reference>
<sequence>MATRIENKKLSKSSSAWMKEHIDDHYVQKAQKDGYRARAAYKLLEINEKTNLIKKGMTVVDLGSAPGSWSQVAGHLVGEKGILIASDILPMDTLPDVTFIQGDFREPEVFDRIMAEVGDRQVDVVLSDMAPNTAGNSAIDQPRMMYLCELAVDFALATLPEGGALIMKVFQGEGTQELRKQMQADFSKIRSIKPGASRPRSKEIFWIAIK</sequence>
<organism>
    <name type="scientific">Psychrobacter cryohalolentis (strain ATCC BAA-1226 / DSM 17306 / VKM B-2378 / K5)</name>
    <dbReference type="NCBI Taxonomy" id="335284"/>
    <lineage>
        <taxon>Bacteria</taxon>
        <taxon>Pseudomonadati</taxon>
        <taxon>Pseudomonadota</taxon>
        <taxon>Gammaproteobacteria</taxon>
        <taxon>Moraxellales</taxon>
        <taxon>Moraxellaceae</taxon>
        <taxon>Psychrobacter</taxon>
    </lineage>
</organism>
<gene>
    <name evidence="1" type="primary">rlmE</name>
    <name evidence="1" type="synonym">ftsJ</name>
    <name evidence="1" type="synonym">rrmJ</name>
    <name type="ordered locus">Pcryo_2021</name>
</gene>
<evidence type="ECO:0000255" key="1">
    <source>
        <dbReference type="HAMAP-Rule" id="MF_01547"/>
    </source>
</evidence>